<keyword id="KW-0963">Cytoplasm</keyword>
<keyword id="KW-0460">Magnesium</keyword>
<keyword id="KW-0479">Metal-binding</keyword>
<keyword id="KW-0548">Nucleotidyltransferase</keyword>
<keyword id="KW-0694">RNA-binding</keyword>
<keyword id="KW-0808">Transferase</keyword>
<proteinExistence type="inferred from homology"/>
<sequence>MKIFREVFELGNKEIVLETGGMARQADGSVTVSCGNNVVLVTTVVKKSVAAGADFFPLSVHYLEKTYAAGKIPGGFLRREGRPSEEQILISRLIDRSIRPSFPDGFFNEIQIVATVLSYDGSFSPDMLALIGASASLAISGAPYDDIIAGVRVGYTNGKYILNPNKEELKESDLDLVVSGTDDAILMVESEANSLPESVMLGGILYAHKHLKTIINSISKLAKVSSKPRIEYTIYQINKLLKSQIKSHFFGEIKNAYTIPSKQERNIKLNELRKNVLEHIFTSDVDGNEYSEKEVLEAFHDIEKDLVRSNILEGKPRIDGRCTETIRPINVKIGVLPGVHGSALFTRGETQALVVTTLGSDRDAQLVESLDGIEKSRYMLHYNFPPYSVGECGMVGMAPKRREIGHANLAKRATQAVFPNEEAYPYVVRIVSEILESNGSSSMATVCGSSLSMMDAGVPIAEPVAGIAMGLIKDGAKYAVLSDILGDEDHLGDMDFKVAGTRYGVTALQMDIKIKGISREILEQAFEQARTGRLHILGIMNEVIREHKESVSDVAPQIHIMNVNPAKIKDVVGRGGSVVKGIVEKTGAQIDTSDSGEVKIFAKDKRSLDLAKSMVEEIVAEVEEGQIYKGKIVKLLDSGAFVNLLGSQDGYLPFSEIEQAGMKTNSLVEGQGLEVLVQNIDRGGRVKLSLVAR</sequence>
<feature type="chain" id="PRO_1000087989" description="Polyribonucleotide nucleotidyltransferase">
    <location>
        <begin position="1"/>
        <end position="693"/>
    </location>
</feature>
<feature type="domain" description="KH" evidence="1">
    <location>
        <begin position="556"/>
        <end position="615"/>
    </location>
</feature>
<feature type="domain" description="S1 motif" evidence="1">
    <location>
        <begin position="625"/>
        <end position="693"/>
    </location>
</feature>
<feature type="binding site" evidence="1">
    <location>
        <position position="489"/>
    </location>
    <ligand>
        <name>Mg(2+)</name>
        <dbReference type="ChEBI" id="CHEBI:18420"/>
    </ligand>
</feature>
<feature type="binding site" evidence="1">
    <location>
        <position position="495"/>
    </location>
    <ligand>
        <name>Mg(2+)</name>
        <dbReference type="ChEBI" id="CHEBI:18420"/>
    </ligand>
</feature>
<organism>
    <name type="scientific">Francisella philomiragia subsp. philomiragia (strain ATCC 25017 / CCUG 19701 / FSC 153 / O#319-036)</name>
    <dbReference type="NCBI Taxonomy" id="484022"/>
    <lineage>
        <taxon>Bacteria</taxon>
        <taxon>Pseudomonadati</taxon>
        <taxon>Pseudomonadota</taxon>
        <taxon>Gammaproteobacteria</taxon>
        <taxon>Thiotrichales</taxon>
        <taxon>Francisellaceae</taxon>
        <taxon>Francisella</taxon>
    </lineage>
</organism>
<gene>
    <name evidence="1" type="primary">pnp</name>
    <name type="ordered locus">Fphi_0232</name>
</gene>
<comment type="function">
    <text evidence="1">Involved in mRNA degradation. Catalyzes the phosphorolysis of single-stranded polyribonucleotides processively in the 3'- to 5'-direction.</text>
</comment>
<comment type="catalytic activity">
    <reaction evidence="1">
        <text>RNA(n+1) + phosphate = RNA(n) + a ribonucleoside 5'-diphosphate</text>
        <dbReference type="Rhea" id="RHEA:22096"/>
        <dbReference type="Rhea" id="RHEA-COMP:14527"/>
        <dbReference type="Rhea" id="RHEA-COMP:17342"/>
        <dbReference type="ChEBI" id="CHEBI:43474"/>
        <dbReference type="ChEBI" id="CHEBI:57930"/>
        <dbReference type="ChEBI" id="CHEBI:140395"/>
        <dbReference type="EC" id="2.7.7.8"/>
    </reaction>
</comment>
<comment type="cofactor">
    <cofactor evidence="1">
        <name>Mg(2+)</name>
        <dbReference type="ChEBI" id="CHEBI:18420"/>
    </cofactor>
</comment>
<comment type="subunit">
    <text evidence="1">Component of the RNA degradosome, which is a multiprotein complex involved in RNA processing and mRNA degradation.</text>
</comment>
<comment type="subcellular location">
    <subcellularLocation>
        <location evidence="1">Cytoplasm</location>
    </subcellularLocation>
</comment>
<comment type="similarity">
    <text evidence="1">Belongs to the polyribonucleotide nucleotidyltransferase family.</text>
</comment>
<accession>B0TZ09</accession>
<dbReference type="EC" id="2.7.7.8" evidence="1"/>
<dbReference type="EMBL" id="CP000937">
    <property type="protein sequence ID" value="ABZ86448.1"/>
    <property type="molecule type" value="Genomic_DNA"/>
</dbReference>
<dbReference type="SMR" id="B0TZ09"/>
<dbReference type="KEGG" id="fph:Fphi_0232"/>
<dbReference type="eggNOG" id="COG1185">
    <property type="taxonomic scope" value="Bacteria"/>
</dbReference>
<dbReference type="HOGENOM" id="CLU_004217_2_2_6"/>
<dbReference type="GO" id="GO:0005829">
    <property type="term" value="C:cytosol"/>
    <property type="evidence" value="ECO:0007669"/>
    <property type="project" value="TreeGrafter"/>
</dbReference>
<dbReference type="GO" id="GO:0000175">
    <property type="term" value="F:3'-5'-RNA exonuclease activity"/>
    <property type="evidence" value="ECO:0007669"/>
    <property type="project" value="TreeGrafter"/>
</dbReference>
<dbReference type="GO" id="GO:0000287">
    <property type="term" value="F:magnesium ion binding"/>
    <property type="evidence" value="ECO:0007669"/>
    <property type="project" value="UniProtKB-UniRule"/>
</dbReference>
<dbReference type="GO" id="GO:0004654">
    <property type="term" value="F:polyribonucleotide nucleotidyltransferase activity"/>
    <property type="evidence" value="ECO:0007669"/>
    <property type="project" value="UniProtKB-UniRule"/>
</dbReference>
<dbReference type="GO" id="GO:0003723">
    <property type="term" value="F:RNA binding"/>
    <property type="evidence" value="ECO:0007669"/>
    <property type="project" value="UniProtKB-UniRule"/>
</dbReference>
<dbReference type="GO" id="GO:0006402">
    <property type="term" value="P:mRNA catabolic process"/>
    <property type="evidence" value="ECO:0007669"/>
    <property type="project" value="UniProtKB-UniRule"/>
</dbReference>
<dbReference type="GO" id="GO:0006396">
    <property type="term" value="P:RNA processing"/>
    <property type="evidence" value="ECO:0007669"/>
    <property type="project" value="InterPro"/>
</dbReference>
<dbReference type="CDD" id="cd02393">
    <property type="entry name" value="KH-I_PNPase"/>
    <property type="match status" value="1"/>
</dbReference>
<dbReference type="CDD" id="cd11363">
    <property type="entry name" value="RNase_PH_PNPase_1"/>
    <property type="match status" value="1"/>
</dbReference>
<dbReference type="CDD" id="cd11364">
    <property type="entry name" value="RNase_PH_PNPase_2"/>
    <property type="match status" value="1"/>
</dbReference>
<dbReference type="FunFam" id="3.30.1370.10:FF:000001">
    <property type="entry name" value="Polyribonucleotide nucleotidyltransferase"/>
    <property type="match status" value="1"/>
</dbReference>
<dbReference type="FunFam" id="3.30.230.70:FF:000001">
    <property type="entry name" value="Polyribonucleotide nucleotidyltransferase"/>
    <property type="match status" value="1"/>
</dbReference>
<dbReference type="FunFam" id="3.30.230.70:FF:000002">
    <property type="entry name" value="Polyribonucleotide nucleotidyltransferase"/>
    <property type="match status" value="1"/>
</dbReference>
<dbReference type="Gene3D" id="3.30.230.70">
    <property type="entry name" value="GHMP Kinase, N-terminal domain"/>
    <property type="match status" value="2"/>
</dbReference>
<dbReference type="Gene3D" id="3.30.1370.10">
    <property type="entry name" value="K Homology domain, type 1"/>
    <property type="match status" value="1"/>
</dbReference>
<dbReference type="Gene3D" id="2.40.50.140">
    <property type="entry name" value="Nucleic acid-binding proteins"/>
    <property type="match status" value="1"/>
</dbReference>
<dbReference type="HAMAP" id="MF_01595">
    <property type="entry name" value="PNPase"/>
    <property type="match status" value="1"/>
</dbReference>
<dbReference type="InterPro" id="IPR001247">
    <property type="entry name" value="ExoRNase_PH_dom1"/>
</dbReference>
<dbReference type="InterPro" id="IPR015847">
    <property type="entry name" value="ExoRNase_PH_dom2"/>
</dbReference>
<dbReference type="InterPro" id="IPR036345">
    <property type="entry name" value="ExoRNase_PH_dom2_sf"/>
</dbReference>
<dbReference type="InterPro" id="IPR004087">
    <property type="entry name" value="KH_dom"/>
</dbReference>
<dbReference type="InterPro" id="IPR004088">
    <property type="entry name" value="KH_dom_type_1"/>
</dbReference>
<dbReference type="InterPro" id="IPR036612">
    <property type="entry name" value="KH_dom_type_1_sf"/>
</dbReference>
<dbReference type="InterPro" id="IPR012340">
    <property type="entry name" value="NA-bd_OB-fold"/>
</dbReference>
<dbReference type="InterPro" id="IPR012162">
    <property type="entry name" value="PNPase"/>
</dbReference>
<dbReference type="InterPro" id="IPR027408">
    <property type="entry name" value="PNPase/RNase_PH_dom_sf"/>
</dbReference>
<dbReference type="InterPro" id="IPR015848">
    <property type="entry name" value="PNPase_PH_RNA-bd_bac/org-type"/>
</dbReference>
<dbReference type="InterPro" id="IPR036456">
    <property type="entry name" value="PNPase_PH_RNA-bd_sf"/>
</dbReference>
<dbReference type="InterPro" id="IPR020568">
    <property type="entry name" value="Ribosomal_Su5_D2-typ_SF"/>
</dbReference>
<dbReference type="InterPro" id="IPR003029">
    <property type="entry name" value="S1_domain"/>
</dbReference>
<dbReference type="NCBIfam" id="TIGR03591">
    <property type="entry name" value="polynuc_phos"/>
    <property type="match status" value="1"/>
</dbReference>
<dbReference type="NCBIfam" id="NF008805">
    <property type="entry name" value="PRK11824.1"/>
    <property type="match status" value="1"/>
</dbReference>
<dbReference type="PANTHER" id="PTHR11252">
    <property type="entry name" value="POLYRIBONUCLEOTIDE NUCLEOTIDYLTRANSFERASE"/>
    <property type="match status" value="1"/>
</dbReference>
<dbReference type="PANTHER" id="PTHR11252:SF0">
    <property type="entry name" value="POLYRIBONUCLEOTIDE NUCLEOTIDYLTRANSFERASE 1, MITOCHONDRIAL"/>
    <property type="match status" value="1"/>
</dbReference>
<dbReference type="Pfam" id="PF00013">
    <property type="entry name" value="KH_1"/>
    <property type="match status" value="1"/>
</dbReference>
<dbReference type="Pfam" id="PF03726">
    <property type="entry name" value="PNPase"/>
    <property type="match status" value="1"/>
</dbReference>
<dbReference type="Pfam" id="PF01138">
    <property type="entry name" value="RNase_PH"/>
    <property type="match status" value="2"/>
</dbReference>
<dbReference type="Pfam" id="PF03725">
    <property type="entry name" value="RNase_PH_C"/>
    <property type="match status" value="2"/>
</dbReference>
<dbReference type="Pfam" id="PF00575">
    <property type="entry name" value="S1"/>
    <property type="match status" value="1"/>
</dbReference>
<dbReference type="PIRSF" id="PIRSF005499">
    <property type="entry name" value="PNPase"/>
    <property type="match status" value="1"/>
</dbReference>
<dbReference type="SMART" id="SM00322">
    <property type="entry name" value="KH"/>
    <property type="match status" value="1"/>
</dbReference>
<dbReference type="SMART" id="SM00316">
    <property type="entry name" value="S1"/>
    <property type="match status" value="1"/>
</dbReference>
<dbReference type="SUPFAM" id="SSF54791">
    <property type="entry name" value="Eukaryotic type KH-domain (KH-domain type I)"/>
    <property type="match status" value="1"/>
</dbReference>
<dbReference type="SUPFAM" id="SSF50249">
    <property type="entry name" value="Nucleic acid-binding proteins"/>
    <property type="match status" value="1"/>
</dbReference>
<dbReference type="SUPFAM" id="SSF46915">
    <property type="entry name" value="Polynucleotide phosphorylase/guanosine pentaphosphate synthase (PNPase/GPSI), domain 3"/>
    <property type="match status" value="1"/>
</dbReference>
<dbReference type="SUPFAM" id="SSF55666">
    <property type="entry name" value="Ribonuclease PH domain 2-like"/>
    <property type="match status" value="2"/>
</dbReference>
<dbReference type="SUPFAM" id="SSF54211">
    <property type="entry name" value="Ribosomal protein S5 domain 2-like"/>
    <property type="match status" value="2"/>
</dbReference>
<dbReference type="PROSITE" id="PS50084">
    <property type="entry name" value="KH_TYPE_1"/>
    <property type="match status" value="1"/>
</dbReference>
<dbReference type="PROSITE" id="PS50126">
    <property type="entry name" value="S1"/>
    <property type="match status" value="1"/>
</dbReference>
<evidence type="ECO:0000255" key="1">
    <source>
        <dbReference type="HAMAP-Rule" id="MF_01595"/>
    </source>
</evidence>
<protein>
    <recommendedName>
        <fullName evidence="1">Polyribonucleotide nucleotidyltransferase</fullName>
        <ecNumber evidence="1">2.7.7.8</ecNumber>
    </recommendedName>
    <alternativeName>
        <fullName evidence="1">Polynucleotide phosphorylase</fullName>
        <shortName evidence="1">PNPase</shortName>
    </alternativeName>
</protein>
<reference key="1">
    <citation type="submission" date="2007-12" db="EMBL/GenBank/DDBJ databases">
        <title>Complete sequence of chromosome of Francisella philomiragia subsp. philomiragia ATCC 25017.</title>
        <authorList>
            <consortium name="US DOE Joint Genome Institute"/>
            <person name="Copeland A."/>
            <person name="Lucas S."/>
            <person name="Lapidus A."/>
            <person name="Barry K."/>
            <person name="Detter J.C."/>
            <person name="Glavina del Rio T."/>
            <person name="Hammon N."/>
            <person name="Israni S."/>
            <person name="Dalin E."/>
            <person name="Tice H."/>
            <person name="Pitluck S."/>
            <person name="Chain P."/>
            <person name="Malfatti S."/>
            <person name="Shin M."/>
            <person name="Vergez L."/>
            <person name="Schmutz J."/>
            <person name="Larimer F."/>
            <person name="Land M."/>
            <person name="Hauser L."/>
            <person name="Richardson P."/>
        </authorList>
    </citation>
    <scope>NUCLEOTIDE SEQUENCE [LARGE SCALE GENOMIC DNA]</scope>
    <source>
        <strain>ATCC 25017 / CCUG 19701 / FSC 153 / O#319-036</strain>
    </source>
</reference>
<name>PNP_FRAP2</name>